<keyword id="KW-0067">ATP-binding</keyword>
<keyword id="KW-0436">Ligase</keyword>
<keyword id="KW-0479">Metal-binding</keyword>
<keyword id="KW-0547">Nucleotide-binding</keyword>
<keyword id="KW-0671">Queuosine biosynthesis</keyword>
<keyword id="KW-1185">Reference proteome</keyword>
<keyword id="KW-0862">Zinc</keyword>
<feature type="chain" id="PRO_0000336920" description="7-cyano-7-deazaguanine synthase">
    <location>
        <begin position="1"/>
        <end position="228"/>
    </location>
</feature>
<feature type="binding site" evidence="1">
    <location>
        <begin position="11"/>
        <end position="21"/>
    </location>
    <ligand>
        <name>ATP</name>
        <dbReference type="ChEBI" id="CHEBI:30616"/>
    </ligand>
</feature>
<feature type="binding site" evidence="1">
    <location>
        <position position="191"/>
    </location>
    <ligand>
        <name>Zn(2+)</name>
        <dbReference type="ChEBI" id="CHEBI:29105"/>
    </ligand>
</feature>
<feature type="binding site" evidence="1">
    <location>
        <position position="201"/>
    </location>
    <ligand>
        <name>Zn(2+)</name>
        <dbReference type="ChEBI" id="CHEBI:29105"/>
    </ligand>
</feature>
<feature type="binding site" evidence="1">
    <location>
        <position position="204"/>
    </location>
    <ligand>
        <name>Zn(2+)</name>
        <dbReference type="ChEBI" id="CHEBI:29105"/>
    </ligand>
</feature>
<feature type="binding site" evidence="1">
    <location>
        <position position="207"/>
    </location>
    <ligand>
        <name>Zn(2+)</name>
        <dbReference type="ChEBI" id="CHEBI:29105"/>
    </ligand>
</feature>
<gene>
    <name evidence="1" type="primary">queC</name>
    <name type="ordered locus">Mmc1_0436</name>
</gene>
<comment type="function">
    <text evidence="1">Catalyzes the ATP-dependent conversion of 7-carboxy-7-deazaguanine (CDG) to 7-cyano-7-deazaguanine (preQ(0)).</text>
</comment>
<comment type="catalytic activity">
    <reaction evidence="1">
        <text>7-carboxy-7-deazaguanine + NH4(+) + ATP = 7-cyano-7-deazaguanine + ADP + phosphate + H2O + H(+)</text>
        <dbReference type="Rhea" id="RHEA:27982"/>
        <dbReference type="ChEBI" id="CHEBI:15377"/>
        <dbReference type="ChEBI" id="CHEBI:15378"/>
        <dbReference type="ChEBI" id="CHEBI:28938"/>
        <dbReference type="ChEBI" id="CHEBI:30616"/>
        <dbReference type="ChEBI" id="CHEBI:43474"/>
        <dbReference type="ChEBI" id="CHEBI:45075"/>
        <dbReference type="ChEBI" id="CHEBI:61036"/>
        <dbReference type="ChEBI" id="CHEBI:456216"/>
        <dbReference type="EC" id="6.3.4.20"/>
    </reaction>
</comment>
<comment type="cofactor">
    <cofactor evidence="1">
        <name>Zn(2+)</name>
        <dbReference type="ChEBI" id="CHEBI:29105"/>
    </cofactor>
    <text evidence="1">Binds 1 zinc ion per subunit.</text>
</comment>
<comment type="pathway">
    <text evidence="1">Purine metabolism; 7-cyano-7-deazaguanine biosynthesis.</text>
</comment>
<comment type="similarity">
    <text evidence="1">Belongs to the QueC family.</text>
</comment>
<name>QUEC_MAGMM</name>
<organism>
    <name type="scientific">Magnetococcus marinus (strain ATCC BAA-1437 / JCM 17883 / MC-1)</name>
    <dbReference type="NCBI Taxonomy" id="156889"/>
    <lineage>
        <taxon>Bacteria</taxon>
        <taxon>Pseudomonadati</taxon>
        <taxon>Pseudomonadota</taxon>
        <taxon>Alphaproteobacteria</taxon>
        <taxon>Magnetococcales</taxon>
        <taxon>Magnetococcaceae</taxon>
        <taxon>Magnetococcus</taxon>
    </lineage>
</organism>
<protein>
    <recommendedName>
        <fullName evidence="1">7-cyano-7-deazaguanine synthase</fullName>
        <ecNumber evidence="1">6.3.4.20</ecNumber>
    </recommendedName>
    <alternativeName>
        <fullName evidence="1">7-cyano-7-carbaguanine synthase</fullName>
    </alternativeName>
    <alternativeName>
        <fullName evidence="1">PreQ(0) synthase</fullName>
    </alternativeName>
    <alternativeName>
        <fullName evidence="1">Queuosine biosynthesis protein QueC</fullName>
    </alternativeName>
</protein>
<proteinExistence type="inferred from homology"/>
<sequence>MPTIMSAVVLLSGGLDSATVLRMAHATGQRIHALSFRYGQRHTMELEMARKQALSLPGVAHRIMDLQLSLFGGSALTADIPVPKGGVDENTIPVTYVPARNMVFLSLALAWAESLGAQHLYIGVNAVDYSGYPDCRPEFIQSFQQTANLATKAGVEGHPFTVHTPLINLTKAQIIQQGLALGVDYGLTRSCYDPDAQGAGCGLCDACRLRLQGFAEAGVPDPAPYQGP</sequence>
<accession>A0L4R8</accession>
<dbReference type="EC" id="6.3.4.20" evidence="1"/>
<dbReference type="EMBL" id="CP000471">
    <property type="protein sequence ID" value="ABK42961.1"/>
    <property type="molecule type" value="Genomic_DNA"/>
</dbReference>
<dbReference type="RefSeq" id="WP_011712131.1">
    <property type="nucleotide sequence ID" value="NC_008576.1"/>
</dbReference>
<dbReference type="SMR" id="A0L4R8"/>
<dbReference type="STRING" id="156889.Mmc1_0436"/>
<dbReference type="KEGG" id="mgm:Mmc1_0436"/>
<dbReference type="eggNOG" id="COG0603">
    <property type="taxonomic scope" value="Bacteria"/>
</dbReference>
<dbReference type="HOGENOM" id="CLU_081854_1_1_5"/>
<dbReference type="OrthoDB" id="9789567at2"/>
<dbReference type="UniPathway" id="UPA00391"/>
<dbReference type="Proteomes" id="UP000002586">
    <property type="component" value="Chromosome"/>
</dbReference>
<dbReference type="GO" id="GO:0005524">
    <property type="term" value="F:ATP binding"/>
    <property type="evidence" value="ECO:0007669"/>
    <property type="project" value="UniProtKB-UniRule"/>
</dbReference>
<dbReference type="GO" id="GO:0016879">
    <property type="term" value="F:ligase activity, forming carbon-nitrogen bonds"/>
    <property type="evidence" value="ECO:0007669"/>
    <property type="project" value="UniProtKB-UniRule"/>
</dbReference>
<dbReference type="GO" id="GO:0008270">
    <property type="term" value="F:zinc ion binding"/>
    <property type="evidence" value="ECO:0007669"/>
    <property type="project" value="UniProtKB-UniRule"/>
</dbReference>
<dbReference type="GO" id="GO:0008616">
    <property type="term" value="P:queuosine biosynthetic process"/>
    <property type="evidence" value="ECO:0007669"/>
    <property type="project" value="UniProtKB-UniRule"/>
</dbReference>
<dbReference type="CDD" id="cd01995">
    <property type="entry name" value="QueC-like"/>
    <property type="match status" value="1"/>
</dbReference>
<dbReference type="Gene3D" id="3.40.50.620">
    <property type="entry name" value="HUPs"/>
    <property type="match status" value="1"/>
</dbReference>
<dbReference type="HAMAP" id="MF_01633">
    <property type="entry name" value="QueC"/>
    <property type="match status" value="1"/>
</dbReference>
<dbReference type="InterPro" id="IPR018317">
    <property type="entry name" value="QueC"/>
</dbReference>
<dbReference type="InterPro" id="IPR014729">
    <property type="entry name" value="Rossmann-like_a/b/a_fold"/>
</dbReference>
<dbReference type="NCBIfam" id="TIGR00364">
    <property type="entry name" value="7-cyano-7-deazaguanine synthase QueC"/>
    <property type="match status" value="1"/>
</dbReference>
<dbReference type="PANTHER" id="PTHR42914">
    <property type="entry name" value="7-CYANO-7-DEAZAGUANINE SYNTHASE"/>
    <property type="match status" value="1"/>
</dbReference>
<dbReference type="PANTHER" id="PTHR42914:SF1">
    <property type="entry name" value="7-CYANO-7-DEAZAGUANINE SYNTHASE"/>
    <property type="match status" value="1"/>
</dbReference>
<dbReference type="Pfam" id="PF06508">
    <property type="entry name" value="QueC"/>
    <property type="match status" value="1"/>
</dbReference>
<dbReference type="PIRSF" id="PIRSF006293">
    <property type="entry name" value="ExsB"/>
    <property type="match status" value="1"/>
</dbReference>
<dbReference type="SUPFAM" id="SSF52402">
    <property type="entry name" value="Adenine nucleotide alpha hydrolases-like"/>
    <property type="match status" value="1"/>
</dbReference>
<evidence type="ECO:0000255" key="1">
    <source>
        <dbReference type="HAMAP-Rule" id="MF_01633"/>
    </source>
</evidence>
<reference key="1">
    <citation type="journal article" date="2009" name="Appl. Environ. Microbiol.">
        <title>Complete genome sequence of the chemolithoautotrophic marine magnetotactic coccus strain MC-1.</title>
        <authorList>
            <person name="Schubbe S."/>
            <person name="Williams T.J."/>
            <person name="Xie G."/>
            <person name="Kiss H.E."/>
            <person name="Brettin T.S."/>
            <person name="Martinez D."/>
            <person name="Ross C.A."/>
            <person name="Schuler D."/>
            <person name="Cox B.L."/>
            <person name="Nealson K.H."/>
            <person name="Bazylinski D.A."/>
        </authorList>
    </citation>
    <scope>NUCLEOTIDE SEQUENCE [LARGE SCALE GENOMIC DNA]</scope>
    <source>
        <strain>ATCC BAA-1437 / JCM 17883 / MC-1</strain>
    </source>
</reference>